<protein>
    <recommendedName>
        <fullName evidence="1">Cytochrome b559 subunit alpha</fullName>
    </recommendedName>
    <alternativeName>
        <fullName evidence="1">PSII reaction center subunit V</fullName>
    </alternativeName>
</protein>
<feature type="chain" id="PRO_0000200319" description="Cytochrome b559 subunit alpha">
    <location>
        <begin position="1"/>
        <end position="81"/>
    </location>
</feature>
<feature type="transmembrane region" description="Helical" evidence="1">
    <location>
        <begin position="21"/>
        <end position="35"/>
    </location>
</feature>
<feature type="binding site" description="axial binding residue" evidence="1">
    <location>
        <position position="23"/>
    </location>
    <ligand>
        <name>heme</name>
        <dbReference type="ChEBI" id="CHEBI:30413"/>
        <note>ligand shared with beta subunit</note>
    </ligand>
    <ligandPart>
        <name>Fe</name>
        <dbReference type="ChEBI" id="CHEBI:18248"/>
    </ligandPart>
</feature>
<keyword id="KW-0150">Chloroplast</keyword>
<keyword id="KW-0249">Electron transport</keyword>
<keyword id="KW-0349">Heme</keyword>
<keyword id="KW-0408">Iron</keyword>
<keyword id="KW-0472">Membrane</keyword>
<keyword id="KW-0479">Metal-binding</keyword>
<keyword id="KW-0602">Photosynthesis</keyword>
<keyword id="KW-0604">Photosystem II</keyword>
<keyword id="KW-0934">Plastid</keyword>
<keyword id="KW-0793">Thylakoid</keyword>
<keyword id="KW-0812">Transmembrane</keyword>
<keyword id="KW-1133">Transmembrane helix</keyword>
<keyword id="KW-0813">Transport</keyword>
<proteinExistence type="inferred from homology"/>
<comment type="function">
    <text evidence="1">This b-type cytochrome is tightly associated with the reaction center of photosystem II (PSII). PSII is a light-driven water:plastoquinone oxidoreductase that uses light energy to abstract electrons from H(2)O, generating O(2) and a proton gradient subsequently used for ATP formation. It consists of a core antenna complex that captures photons, and an electron transfer chain that converts photonic excitation into a charge separation.</text>
</comment>
<comment type="cofactor">
    <cofactor evidence="1">
        <name>heme b</name>
        <dbReference type="ChEBI" id="CHEBI:60344"/>
    </cofactor>
    <text evidence="1">With its partner (PsbF) binds heme. PSII binds additional chlorophylls, carotenoids and specific lipids.</text>
</comment>
<comment type="subunit">
    <text evidence="1">Heterodimer of an alpha subunit and a beta subunit. PSII is composed of 1 copy each of membrane proteins PsbA, PsbB, PsbC, PsbD, PsbE, PsbF, PsbH, PsbI, PsbJ, PsbK, PsbL, PsbM, PsbT, PsbX, PsbY, PsbZ, Psb30/Ycf12, at least 3 peripheral proteins of the oxygen-evolving complex and a large number of cofactors. It forms dimeric complexes.</text>
</comment>
<comment type="subcellular location">
    <subcellularLocation>
        <location evidence="1">Plastid</location>
        <location evidence="1">Chloroplast thylakoid membrane</location>
        <topology evidence="1">Single-pass membrane protein</topology>
    </subcellularLocation>
</comment>
<comment type="similarity">
    <text evidence="1">Belongs to the PsbE/PsbF family.</text>
</comment>
<sequence>MAGSTEERPFSDIITSIRYWVIHSITIPSLFVSGWLFVSTGLAYDVFGTPRPNEYFTEDRQDIPLITDRFNALEQLNQYTK</sequence>
<accession>Q9MUQ0</accession>
<organism>
    <name type="scientific">Mesostigma viride</name>
    <name type="common">Green alga</name>
    <dbReference type="NCBI Taxonomy" id="41882"/>
    <lineage>
        <taxon>Eukaryota</taxon>
        <taxon>Viridiplantae</taxon>
        <taxon>Streptophyta</taxon>
        <taxon>Mesostigmatophyceae</taxon>
        <taxon>Mesostigmatales</taxon>
        <taxon>Mesostigmataceae</taxon>
        <taxon>Mesostigma</taxon>
    </lineage>
</organism>
<gene>
    <name evidence="1" type="primary">psbE</name>
</gene>
<evidence type="ECO:0000255" key="1">
    <source>
        <dbReference type="HAMAP-Rule" id="MF_00642"/>
    </source>
</evidence>
<geneLocation type="chloroplast"/>
<dbReference type="EMBL" id="AF166114">
    <property type="protein sequence ID" value="AAF43850.1"/>
    <property type="molecule type" value="Genomic_DNA"/>
</dbReference>
<dbReference type="RefSeq" id="NP_038410.1">
    <property type="nucleotide sequence ID" value="NC_002186.1"/>
</dbReference>
<dbReference type="SMR" id="Q9MUQ0"/>
<dbReference type="GeneID" id="800903"/>
<dbReference type="GO" id="GO:0009535">
    <property type="term" value="C:chloroplast thylakoid membrane"/>
    <property type="evidence" value="ECO:0007669"/>
    <property type="project" value="UniProtKB-SubCell"/>
</dbReference>
<dbReference type="GO" id="GO:0009539">
    <property type="term" value="C:photosystem II reaction center"/>
    <property type="evidence" value="ECO:0007669"/>
    <property type="project" value="InterPro"/>
</dbReference>
<dbReference type="GO" id="GO:0009055">
    <property type="term" value="F:electron transfer activity"/>
    <property type="evidence" value="ECO:0007669"/>
    <property type="project" value="UniProtKB-UniRule"/>
</dbReference>
<dbReference type="GO" id="GO:0020037">
    <property type="term" value="F:heme binding"/>
    <property type="evidence" value="ECO:0007669"/>
    <property type="project" value="InterPro"/>
</dbReference>
<dbReference type="GO" id="GO:0005506">
    <property type="term" value="F:iron ion binding"/>
    <property type="evidence" value="ECO:0007669"/>
    <property type="project" value="UniProtKB-UniRule"/>
</dbReference>
<dbReference type="GO" id="GO:0009767">
    <property type="term" value="P:photosynthetic electron transport chain"/>
    <property type="evidence" value="ECO:0007669"/>
    <property type="project" value="InterPro"/>
</dbReference>
<dbReference type="Gene3D" id="1.20.5.860">
    <property type="entry name" value="Photosystem II cytochrome b559, alpha subunit"/>
    <property type="match status" value="1"/>
</dbReference>
<dbReference type="HAMAP" id="MF_00642">
    <property type="entry name" value="PSII_PsbE"/>
    <property type="match status" value="1"/>
</dbReference>
<dbReference type="InterPro" id="IPR006217">
    <property type="entry name" value="PSII_cyt_b559_asu"/>
</dbReference>
<dbReference type="InterPro" id="IPR037025">
    <property type="entry name" value="PSII_cyt_b559_asu_sf"/>
</dbReference>
<dbReference type="InterPro" id="IPR006216">
    <property type="entry name" value="PSII_cyt_b559_CS"/>
</dbReference>
<dbReference type="InterPro" id="IPR013081">
    <property type="entry name" value="PSII_cyt_b559_N"/>
</dbReference>
<dbReference type="InterPro" id="IPR013082">
    <property type="entry name" value="PSII_cytb559_asu_lum"/>
</dbReference>
<dbReference type="NCBIfam" id="TIGR01332">
    <property type="entry name" value="cyt_b559_alpha"/>
    <property type="match status" value="1"/>
</dbReference>
<dbReference type="PANTHER" id="PTHR33391">
    <property type="entry name" value="CYTOCHROME B559 SUBUNIT BETA-RELATED"/>
    <property type="match status" value="1"/>
</dbReference>
<dbReference type="PANTHER" id="PTHR33391:SF9">
    <property type="entry name" value="CYTOCHROME B559 SUBUNIT BETA-RELATED"/>
    <property type="match status" value="1"/>
</dbReference>
<dbReference type="Pfam" id="PF00283">
    <property type="entry name" value="Cytochrom_B559"/>
    <property type="match status" value="1"/>
</dbReference>
<dbReference type="Pfam" id="PF00284">
    <property type="entry name" value="Cytochrom_B559a"/>
    <property type="match status" value="1"/>
</dbReference>
<dbReference type="PIRSF" id="PIRSF000036">
    <property type="entry name" value="PsbE"/>
    <property type="match status" value="1"/>
</dbReference>
<dbReference type="SUPFAM" id="SSF161045">
    <property type="entry name" value="Cytochrome b559 subunits"/>
    <property type="match status" value="1"/>
</dbReference>
<dbReference type="PROSITE" id="PS00537">
    <property type="entry name" value="CYTOCHROME_B559"/>
    <property type="match status" value="1"/>
</dbReference>
<reference key="1">
    <citation type="journal article" date="2000" name="Nature">
        <title>Ancestral chloroplast genome in Mesostigma viride reveals an early branch of green plant evolution.</title>
        <authorList>
            <person name="Lemieux C."/>
            <person name="Otis C."/>
            <person name="Turmel M."/>
        </authorList>
    </citation>
    <scope>NUCLEOTIDE SEQUENCE [LARGE SCALE GENOMIC DNA]</scope>
    <source>
        <strain>NIES-296 / KY-14 / CCMP 2046</strain>
    </source>
</reference>
<name>PSBE_MESVI</name>